<name>SCAF_BPT4</name>
<dbReference type="EMBL" id="X16492">
    <property type="protein sequence ID" value="CAA34509.1"/>
    <property type="molecule type" value="Genomic_DNA"/>
</dbReference>
<dbReference type="EMBL" id="K01765">
    <property type="protein sequence ID" value="AAA32502.1"/>
    <property type="molecule type" value="Genomic_DNA"/>
</dbReference>
<dbReference type="EMBL" id="AF158101">
    <property type="protein sequence ID" value="AAD42427.1"/>
    <property type="molecule type" value="Genomic_DNA"/>
</dbReference>
<dbReference type="EMBL" id="D10978">
    <property type="protein sequence ID" value="BAA01752.1"/>
    <property type="molecule type" value="Genomic_DNA"/>
</dbReference>
<dbReference type="PIR" id="S06066">
    <property type="entry name" value="Z2BPT4"/>
</dbReference>
<dbReference type="RefSeq" id="NP_049786.1">
    <property type="nucleotide sequence ID" value="NC_000866.4"/>
</dbReference>
<dbReference type="SMR" id="P04534"/>
<dbReference type="GeneID" id="1258775"/>
<dbReference type="KEGG" id="vg:1258775"/>
<dbReference type="OrthoDB" id="10804at10239"/>
<dbReference type="Proteomes" id="UP000009087">
    <property type="component" value="Segment"/>
</dbReference>
<dbReference type="GO" id="GO:0044423">
    <property type="term" value="C:virion component"/>
    <property type="evidence" value="ECO:0007669"/>
    <property type="project" value="UniProtKB-KW"/>
</dbReference>
<organism>
    <name type="scientific">Enterobacteria phage T4</name>
    <name type="common">Bacteriophage T4</name>
    <dbReference type="NCBI Taxonomy" id="10665"/>
    <lineage>
        <taxon>Viruses</taxon>
        <taxon>Duplodnaviria</taxon>
        <taxon>Heunggongvirae</taxon>
        <taxon>Uroviricota</taxon>
        <taxon>Caudoviricetes</taxon>
        <taxon>Straboviridae</taxon>
        <taxon>Tevenvirinae</taxon>
        <taxon>Tequatrovirus</taxon>
    </lineage>
</organism>
<sequence>MLKEQLIAEAQKIDASVALDSIFESVNISPEAKETFGTVFEATVKQHAVKLAESHIAKIAEKAEEEVEKNKEEAEEKAEKKIAEQASKFIDHLAKEWLAENKLAVDKGIKAELFESMLGGLKELFVEHNVVVPEESVDVVAEMEEELQEHKEESPRLFEELNMRDAYINYVQREVALSESTKDLTESQKEKVSALVEGMDYSDAFSSKLSAIVEMVKKSNKDESTITESINTPDTEAAGLNFVTEAVEDKAAQGAEDIVSVYAKVASRF</sequence>
<keyword id="KW-0903">Direct protein sequencing</keyword>
<keyword id="KW-1185">Reference proteome</keyword>
<keyword id="KW-0118">Viral capsid assembly</keyword>
<keyword id="KW-1188">Viral release from host cell</keyword>
<keyword id="KW-0946">Virion</keyword>
<comment type="function">
    <molecule>Capsid assembly scaffolding protein</molecule>
    <text evidence="3">Scaffolding protein involved in the icosahedric procapsid assembly. Coassembles with the capsid proteins to form the procapsid, in which the scaffolding protein is found within the external shell of icosahedrally arranged capsid protein subunits. In a subsequent step the scaffolding protein molecules are cleaved by the viral protease and released, except for the internal peptide VII.</text>
</comment>
<comment type="function">
    <molecule>Internal peptide VII</molecule>
    <text evidence="1">Cleavage product of Gp22 that is incorporated into the mature phage head.</text>
</comment>
<comment type="subcellular location">
    <molecule>Internal peptide VII</molecule>
    <subcellularLocation>
        <location>Virion</location>
    </subcellularLocation>
</comment>
<comment type="similarity">
    <text evidence="2">Belongs to the T4likevirus capsid assembly scaffolding protein family.</text>
</comment>
<accession>P04534</accession>
<accession>P03721</accession>
<accession>P03722</accession>
<accession>Q38389</accession>
<gene>
    <name type="primary">22</name>
</gene>
<reference key="1">
    <citation type="journal article" date="1989" name="Nucleic Acids Res.">
        <title>Nucleotide and deduced amino acid sequences of bacteriophage T4 gene 22.</title>
        <authorList>
            <person name="Marusich E.I."/>
            <person name="Mesyanzhinov V.V."/>
        </authorList>
    </citation>
    <scope>NUCLEOTIDE SEQUENCE [GENOMIC DNA]</scope>
    <source>
        <strain>D</strain>
    </source>
</reference>
<reference key="2">
    <citation type="journal article" date="2003" name="Microbiol. Mol. Biol. Rev.">
        <title>Bacteriophage T4 genome.</title>
        <authorList>
            <person name="Miller E.S."/>
            <person name="Kutter E."/>
            <person name="Mosig G."/>
            <person name="Arisaka F."/>
            <person name="Kunisawa T."/>
            <person name="Ruger W."/>
        </authorList>
    </citation>
    <scope>NUCLEOTIDE SEQUENCE [LARGE SCALE GENOMIC DNA]</scope>
</reference>
<reference key="3">
    <citation type="submission" date="1981-08" db="EMBL/GenBank/DDBJ databases">
        <authorList>
            <person name="Christensen A.C."/>
        </authorList>
    </citation>
    <scope>NUCLEOTIDE SEQUENCE [GENOMIC DNA] OF 86-269</scope>
</reference>
<reference key="4">
    <citation type="submission" date="1992-07" db="EMBL/GenBank/DDBJ databases">
        <authorList>
            <person name="Noguchi T."/>
            <person name="Takahashi H."/>
        </authorList>
    </citation>
    <scope>NUCLEOTIDE SEQUENCE [GENOMIC DNA] OF 1-183</scope>
</reference>
<reference key="5">
    <citation type="journal article" date="1982" name="Nature">
        <title>T4 late transcripts are initiated near a conserved DNA sequence.</title>
        <authorList>
            <person name="Christensen A.C."/>
            <person name="Young E.T."/>
        </authorList>
    </citation>
    <scope>NUCLEOTIDE SEQUENCE [GENOMIC DNA] OF 221-238</scope>
</reference>
<reference key="6">
    <citation type="journal article" date="1984" name="Cell">
        <title>Defining a bacteriophage T4 late promoter: absence of a '-35' region.</title>
        <authorList>
            <person name="Elliott T."/>
            <person name="Geiduschek E.P."/>
        </authorList>
    </citation>
    <scope>NUCLEOTIDE SEQUENCE [GENOMIC DNA] OF 218-239</scope>
</reference>
<reference key="7">
    <citation type="journal article" date="1984" name="J. Mol. Biol.">
        <title>Nucleotide sequence of bacteriophage T4 gene 23 and the amino acid sequence of its product.</title>
        <authorList>
            <person name="Parker M.L."/>
            <person name="Christensen A.C."/>
            <person name="Boosman A."/>
            <person name="Stockard J."/>
            <person name="Young E.T."/>
            <person name="Doermann A.H."/>
        </authorList>
    </citation>
    <scope>NUCLEOTIDE SEQUENCE [GENOMIC DNA] OF 197-269</scope>
    <source>
        <strain>D</strain>
    </source>
</reference>
<reference key="8">
    <citation type="journal article" date="1977" name="J. Mol. Biol.">
        <title>Primary structure of internal peptide VII of T-even bacteriophages.</title>
        <authorList>
            <person name="van Eerd J.P."/>
            <person name="Champe S.P."/>
            <person name="Yager L."/>
            <person name="Kubota I."/>
            <person name="Tsugita A."/>
        </authorList>
    </citation>
    <scope>PROTEIN SEQUENCE OF 62-84</scope>
</reference>
<reference key="9">
    <citation type="journal article" date="1984" name="Virology">
        <title>Intracellular morphogenesis of bacteriophage T4. II. Head morphogenesis.</title>
        <authorList>
            <person name="Eiserling F.A."/>
            <person name="Corso J."/>
            <person name="Feng S."/>
            <person name="Epstein R.H."/>
        </authorList>
    </citation>
    <scope>FUNCTION (INTERNAL PEPTIDE VII)</scope>
    <scope>FUNCTION (CAPSID ASSEMBLY SCAFFOLDING PROTEIN)</scope>
</reference>
<evidence type="ECO:0000269" key="1">
    <source>
    </source>
</evidence>
<evidence type="ECO:0000305" key="2"/>
<evidence type="ECO:0000305" key="3">
    <source>
    </source>
</evidence>
<feature type="chain" id="PRO_0000045381" description="Capsid assembly scaffolding protein">
    <location>
        <begin position="1"/>
        <end position="269"/>
    </location>
</feature>
<feature type="peptide" id="PRO_0000003335" description="Internal peptide VII">
    <location>
        <begin position="62"/>
        <end position="84"/>
    </location>
</feature>
<feature type="sequence conflict" description="In Ref. 3; AAA32502." evidence="2" ref="3">
    <original>F</original>
    <variation>S</variation>
    <location>
        <position position="89"/>
    </location>
</feature>
<organismHost>
    <name type="scientific">Escherichia coli</name>
    <dbReference type="NCBI Taxonomy" id="562"/>
</organismHost>
<protein>
    <recommendedName>
        <fullName>Capsid assembly scaffolding protein</fullName>
    </recommendedName>
    <alternativeName>
        <fullName>Gene product 22</fullName>
        <shortName>gp22</shortName>
    </alternativeName>
    <alternativeName>
        <fullName evidence="2">Head morphogenesis protein</fullName>
    </alternativeName>
    <alternativeName>
        <fullName>Scaffold protein</fullName>
    </alternativeName>
    <component>
        <recommendedName>
            <fullName>Internal peptide VII</fullName>
        </recommendedName>
    </component>
</protein>
<proteinExistence type="evidence at protein level"/>